<organism>
    <name type="scientific">Yersinia pestis bv. Antiqua (strain Antiqua)</name>
    <dbReference type="NCBI Taxonomy" id="360102"/>
    <lineage>
        <taxon>Bacteria</taxon>
        <taxon>Pseudomonadati</taxon>
        <taxon>Pseudomonadota</taxon>
        <taxon>Gammaproteobacteria</taxon>
        <taxon>Enterobacterales</taxon>
        <taxon>Yersiniaceae</taxon>
        <taxon>Yersinia</taxon>
    </lineage>
</organism>
<name>RNFE_YERPA</name>
<accession>Q1C7K7</accession>
<reference key="1">
    <citation type="journal article" date="2006" name="J. Bacteriol.">
        <title>Complete genome sequence of Yersinia pestis strains Antiqua and Nepal516: evidence of gene reduction in an emerging pathogen.</title>
        <authorList>
            <person name="Chain P.S.G."/>
            <person name="Hu P."/>
            <person name="Malfatti S.A."/>
            <person name="Radnedge L."/>
            <person name="Larimer F."/>
            <person name="Vergez L.M."/>
            <person name="Worsham P."/>
            <person name="Chu M.C."/>
            <person name="Andersen G.L."/>
        </authorList>
    </citation>
    <scope>NUCLEOTIDE SEQUENCE [LARGE SCALE GENOMIC DNA]</scope>
    <source>
        <strain>Antiqua</strain>
    </source>
</reference>
<protein>
    <recommendedName>
        <fullName evidence="1">Ion-translocating oxidoreductase complex subunit E</fullName>
        <ecNumber evidence="1">7.-.-.-</ecNumber>
    </recommendedName>
    <alternativeName>
        <fullName evidence="1">Rnf electron transport complex subunit E</fullName>
    </alternativeName>
</protein>
<dbReference type="EC" id="7.-.-.-" evidence="1"/>
<dbReference type="EMBL" id="CP000308">
    <property type="protein sequence ID" value="ABG13565.1"/>
    <property type="molecule type" value="Genomic_DNA"/>
</dbReference>
<dbReference type="RefSeq" id="WP_002210601.1">
    <property type="nucleotide sequence ID" value="NZ_CP009906.1"/>
</dbReference>
<dbReference type="SMR" id="Q1C7K7"/>
<dbReference type="KEGG" id="ypa:YPA_1599"/>
<dbReference type="Proteomes" id="UP000001971">
    <property type="component" value="Chromosome"/>
</dbReference>
<dbReference type="GO" id="GO:0005886">
    <property type="term" value="C:plasma membrane"/>
    <property type="evidence" value="ECO:0007669"/>
    <property type="project" value="UniProtKB-SubCell"/>
</dbReference>
<dbReference type="GO" id="GO:0022900">
    <property type="term" value="P:electron transport chain"/>
    <property type="evidence" value="ECO:0007669"/>
    <property type="project" value="UniProtKB-UniRule"/>
</dbReference>
<dbReference type="HAMAP" id="MF_00478">
    <property type="entry name" value="RsxE_RnfE"/>
    <property type="match status" value="1"/>
</dbReference>
<dbReference type="InterPro" id="IPR003667">
    <property type="entry name" value="NqrDE/RnfAE"/>
</dbReference>
<dbReference type="InterPro" id="IPR010968">
    <property type="entry name" value="RnfE"/>
</dbReference>
<dbReference type="NCBIfam" id="NF009070">
    <property type="entry name" value="PRK12405.1"/>
    <property type="match status" value="1"/>
</dbReference>
<dbReference type="NCBIfam" id="TIGR01948">
    <property type="entry name" value="rnfE"/>
    <property type="match status" value="1"/>
</dbReference>
<dbReference type="PANTHER" id="PTHR30586">
    <property type="entry name" value="ELECTRON TRANSPORT COMPLEX PROTEIN RNFE"/>
    <property type="match status" value="1"/>
</dbReference>
<dbReference type="PANTHER" id="PTHR30586:SF0">
    <property type="entry name" value="ION-TRANSLOCATING OXIDOREDUCTASE COMPLEX SUBUNIT E"/>
    <property type="match status" value="1"/>
</dbReference>
<dbReference type="Pfam" id="PF02508">
    <property type="entry name" value="Rnf-Nqr"/>
    <property type="match status" value="1"/>
</dbReference>
<dbReference type="PIRSF" id="PIRSF006102">
    <property type="entry name" value="NQR_DE"/>
    <property type="match status" value="1"/>
</dbReference>
<feature type="chain" id="PRO_1000014115" description="Ion-translocating oxidoreductase complex subunit E">
    <location>
        <begin position="1"/>
        <end position="233"/>
    </location>
</feature>
<feature type="transmembrane region" description="Helical" evidence="1">
    <location>
        <begin position="18"/>
        <end position="38"/>
    </location>
</feature>
<feature type="transmembrane region" description="Helical" evidence="1">
    <location>
        <begin position="39"/>
        <end position="59"/>
    </location>
</feature>
<feature type="transmembrane region" description="Helical" evidence="1">
    <location>
        <begin position="69"/>
        <end position="89"/>
    </location>
</feature>
<feature type="transmembrane region" description="Helical" evidence="1">
    <location>
        <begin position="92"/>
        <end position="112"/>
    </location>
</feature>
<feature type="transmembrane region" description="Helical" evidence="1">
    <location>
        <begin position="128"/>
        <end position="148"/>
    </location>
</feature>
<feature type="transmembrane region" description="Helical" evidence="1">
    <location>
        <begin position="182"/>
        <end position="202"/>
    </location>
</feature>
<keyword id="KW-0997">Cell inner membrane</keyword>
<keyword id="KW-1003">Cell membrane</keyword>
<keyword id="KW-0249">Electron transport</keyword>
<keyword id="KW-0472">Membrane</keyword>
<keyword id="KW-1278">Translocase</keyword>
<keyword id="KW-0812">Transmembrane</keyword>
<keyword id="KW-1133">Transmembrane helix</keyword>
<keyword id="KW-0813">Transport</keyword>
<evidence type="ECO:0000255" key="1">
    <source>
        <dbReference type="HAMAP-Rule" id="MF_00478"/>
    </source>
</evidence>
<comment type="function">
    <text evidence="1">Part of a membrane-bound complex that couples electron transfer with translocation of ions across the membrane.</text>
</comment>
<comment type="subunit">
    <text evidence="1">The complex is composed of six subunits: RnfA, RnfB, RnfC, RnfD, RnfE and RnfG.</text>
</comment>
<comment type="subcellular location">
    <subcellularLocation>
        <location evidence="1">Cell inner membrane</location>
        <topology evidence="1">Multi-pass membrane protein</topology>
    </subcellularLocation>
</comment>
<comment type="similarity">
    <text evidence="1">Belongs to the NqrDE/RnfAE family.</text>
</comment>
<gene>
    <name evidence="1" type="primary">rnfE</name>
    <name type="ordered locus">YPA_1599</name>
</gene>
<proteinExistence type="inferred from homology"/>
<sequence length="233" mass="24587">MSEAKNLLAQGLWKNNSALVQLLGLCPLLAVSSTATNALGLGLATTLVLVCTNTAVSALRRWVPSEIRIPIYVMIIASVVSTVQMLINAYAFGLYQSLGIFIPLIVTNCIVIGRAEAYAAKNPVGLSALDGFAMGMGATCALFVLGALREILGNGTLFDGADMLLGSWATVLRIDILHLDTPFLLAMLPPGAFIGLGLLLAGKYVIDEKMKARKANTRVSVPQLQDGDAEKAL</sequence>